<organism>
    <name type="scientific">Alkalilimnicola ehrlichii (strain ATCC BAA-1101 / DSM 17681 / MLHE-1)</name>
    <dbReference type="NCBI Taxonomy" id="187272"/>
    <lineage>
        <taxon>Bacteria</taxon>
        <taxon>Pseudomonadati</taxon>
        <taxon>Pseudomonadota</taxon>
        <taxon>Gammaproteobacteria</taxon>
        <taxon>Chromatiales</taxon>
        <taxon>Ectothiorhodospiraceae</taxon>
        <taxon>Alkalilimnicola</taxon>
    </lineage>
</organism>
<protein>
    <recommendedName>
        <fullName evidence="2">D-alanine--D-alanine ligase</fullName>
        <ecNumber evidence="2">6.3.2.4</ecNumber>
    </recommendedName>
    <alternativeName>
        <fullName evidence="2">D-Ala-D-Ala ligase</fullName>
    </alternativeName>
    <alternativeName>
        <fullName evidence="2">D-alanylalanine synthetase</fullName>
    </alternativeName>
</protein>
<evidence type="ECO:0000250" key="1"/>
<evidence type="ECO:0000255" key="2">
    <source>
        <dbReference type="HAMAP-Rule" id="MF_00047"/>
    </source>
</evidence>
<keyword id="KW-0067">ATP-binding</keyword>
<keyword id="KW-0133">Cell shape</keyword>
<keyword id="KW-0961">Cell wall biogenesis/degradation</keyword>
<keyword id="KW-0963">Cytoplasm</keyword>
<keyword id="KW-0436">Ligase</keyword>
<keyword id="KW-0460">Magnesium</keyword>
<keyword id="KW-0464">Manganese</keyword>
<keyword id="KW-0479">Metal-binding</keyword>
<keyword id="KW-0547">Nucleotide-binding</keyword>
<keyword id="KW-0573">Peptidoglycan synthesis</keyword>
<keyword id="KW-1185">Reference proteome</keyword>
<name>DDL_ALKEH</name>
<feature type="chain" id="PRO_0000341049" description="D-alanine--D-alanine ligase">
    <location>
        <begin position="1"/>
        <end position="311"/>
    </location>
</feature>
<feature type="domain" description="ATP-grasp" evidence="2">
    <location>
        <begin position="106"/>
        <end position="301"/>
    </location>
</feature>
<feature type="binding site" evidence="2">
    <location>
        <begin position="132"/>
        <end position="187"/>
    </location>
    <ligand>
        <name>ATP</name>
        <dbReference type="ChEBI" id="CHEBI:30616"/>
    </ligand>
</feature>
<feature type="binding site" evidence="2">
    <location>
        <position position="255"/>
    </location>
    <ligand>
        <name>Mg(2+)</name>
        <dbReference type="ChEBI" id="CHEBI:18420"/>
        <label>1</label>
    </ligand>
</feature>
<feature type="binding site" evidence="2">
    <location>
        <position position="268"/>
    </location>
    <ligand>
        <name>Mg(2+)</name>
        <dbReference type="ChEBI" id="CHEBI:18420"/>
        <label>1</label>
    </ligand>
</feature>
<feature type="binding site" evidence="2">
    <location>
        <position position="268"/>
    </location>
    <ligand>
        <name>Mg(2+)</name>
        <dbReference type="ChEBI" id="CHEBI:18420"/>
        <label>2</label>
    </ligand>
</feature>
<feature type="binding site" evidence="2">
    <location>
        <position position="270"/>
    </location>
    <ligand>
        <name>Mg(2+)</name>
        <dbReference type="ChEBI" id="CHEBI:18420"/>
        <label>2</label>
    </ligand>
</feature>
<comment type="function">
    <text evidence="2">Cell wall formation.</text>
</comment>
<comment type="catalytic activity">
    <reaction evidence="2">
        <text>2 D-alanine + ATP = D-alanyl-D-alanine + ADP + phosphate + H(+)</text>
        <dbReference type="Rhea" id="RHEA:11224"/>
        <dbReference type="ChEBI" id="CHEBI:15378"/>
        <dbReference type="ChEBI" id="CHEBI:30616"/>
        <dbReference type="ChEBI" id="CHEBI:43474"/>
        <dbReference type="ChEBI" id="CHEBI:57416"/>
        <dbReference type="ChEBI" id="CHEBI:57822"/>
        <dbReference type="ChEBI" id="CHEBI:456216"/>
        <dbReference type="EC" id="6.3.2.4"/>
    </reaction>
</comment>
<comment type="cofactor">
    <cofactor evidence="1">
        <name>Mg(2+)</name>
        <dbReference type="ChEBI" id="CHEBI:18420"/>
    </cofactor>
    <cofactor evidence="1">
        <name>Mn(2+)</name>
        <dbReference type="ChEBI" id="CHEBI:29035"/>
    </cofactor>
    <text evidence="1">Binds 2 magnesium or manganese ions per subunit.</text>
</comment>
<comment type="pathway">
    <text evidence="2">Cell wall biogenesis; peptidoglycan biosynthesis.</text>
</comment>
<comment type="subcellular location">
    <subcellularLocation>
        <location evidence="2">Cytoplasm</location>
    </subcellularLocation>
</comment>
<comment type="similarity">
    <text evidence="2">Belongs to the D-alanine--D-alanine ligase family.</text>
</comment>
<proteinExistence type="inferred from homology"/>
<gene>
    <name evidence="2" type="primary">ddl</name>
    <name type="ordered locus">Mlg_2190</name>
</gene>
<reference key="1">
    <citation type="submission" date="2006-08" db="EMBL/GenBank/DDBJ databases">
        <title>Complete sequence of Alkalilimnicola ehrilichei MLHE-1.</title>
        <authorList>
            <person name="Copeland A."/>
            <person name="Lucas S."/>
            <person name="Lapidus A."/>
            <person name="Barry K."/>
            <person name="Detter J.C."/>
            <person name="Glavina del Rio T."/>
            <person name="Hammon N."/>
            <person name="Israni S."/>
            <person name="Dalin E."/>
            <person name="Tice H."/>
            <person name="Pitluck S."/>
            <person name="Sims D."/>
            <person name="Brettin T."/>
            <person name="Bruce D."/>
            <person name="Han C."/>
            <person name="Tapia R."/>
            <person name="Gilna P."/>
            <person name="Schmutz J."/>
            <person name="Larimer F."/>
            <person name="Land M."/>
            <person name="Hauser L."/>
            <person name="Kyrpides N."/>
            <person name="Mikhailova N."/>
            <person name="Oremland R.S."/>
            <person name="Hoeft S.E."/>
            <person name="Switzer-Blum J."/>
            <person name="Kulp T."/>
            <person name="King G."/>
            <person name="Tabita R."/>
            <person name="Witte B."/>
            <person name="Santini J.M."/>
            <person name="Basu P."/>
            <person name="Hollibaugh J.T."/>
            <person name="Xie G."/>
            <person name="Stolz J.F."/>
            <person name="Richardson P."/>
        </authorList>
    </citation>
    <scope>NUCLEOTIDE SEQUENCE [LARGE SCALE GENOMIC DNA]</scope>
    <source>
        <strain>ATCC BAA-1101 / DSM 17681 / MLHE-1</strain>
    </source>
</reference>
<dbReference type="EC" id="6.3.2.4" evidence="2"/>
<dbReference type="EMBL" id="CP000453">
    <property type="protein sequence ID" value="ABI57532.1"/>
    <property type="molecule type" value="Genomic_DNA"/>
</dbReference>
<dbReference type="RefSeq" id="WP_011629926.1">
    <property type="nucleotide sequence ID" value="NC_008340.1"/>
</dbReference>
<dbReference type="SMR" id="Q0A6K5"/>
<dbReference type="KEGG" id="aeh:Mlg_2190"/>
<dbReference type="eggNOG" id="COG1181">
    <property type="taxonomic scope" value="Bacteria"/>
</dbReference>
<dbReference type="HOGENOM" id="CLU_039268_1_2_6"/>
<dbReference type="OrthoDB" id="9813261at2"/>
<dbReference type="UniPathway" id="UPA00219"/>
<dbReference type="Proteomes" id="UP000001962">
    <property type="component" value="Chromosome"/>
</dbReference>
<dbReference type="GO" id="GO:0005829">
    <property type="term" value="C:cytosol"/>
    <property type="evidence" value="ECO:0007669"/>
    <property type="project" value="TreeGrafter"/>
</dbReference>
<dbReference type="GO" id="GO:0005524">
    <property type="term" value="F:ATP binding"/>
    <property type="evidence" value="ECO:0007669"/>
    <property type="project" value="UniProtKB-KW"/>
</dbReference>
<dbReference type="GO" id="GO:0008716">
    <property type="term" value="F:D-alanine-D-alanine ligase activity"/>
    <property type="evidence" value="ECO:0007669"/>
    <property type="project" value="UniProtKB-UniRule"/>
</dbReference>
<dbReference type="GO" id="GO:0046872">
    <property type="term" value="F:metal ion binding"/>
    <property type="evidence" value="ECO:0007669"/>
    <property type="project" value="UniProtKB-KW"/>
</dbReference>
<dbReference type="GO" id="GO:0071555">
    <property type="term" value="P:cell wall organization"/>
    <property type="evidence" value="ECO:0007669"/>
    <property type="project" value="UniProtKB-KW"/>
</dbReference>
<dbReference type="GO" id="GO:0009252">
    <property type="term" value="P:peptidoglycan biosynthetic process"/>
    <property type="evidence" value="ECO:0007669"/>
    <property type="project" value="UniProtKB-UniRule"/>
</dbReference>
<dbReference type="GO" id="GO:0008360">
    <property type="term" value="P:regulation of cell shape"/>
    <property type="evidence" value="ECO:0007669"/>
    <property type="project" value="UniProtKB-KW"/>
</dbReference>
<dbReference type="FunFam" id="3.30.470.20:FF:000008">
    <property type="entry name" value="D-alanine--D-alanine ligase"/>
    <property type="match status" value="1"/>
</dbReference>
<dbReference type="Gene3D" id="3.40.50.20">
    <property type="match status" value="1"/>
</dbReference>
<dbReference type="Gene3D" id="3.30.1490.20">
    <property type="entry name" value="ATP-grasp fold, A domain"/>
    <property type="match status" value="1"/>
</dbReference>
<dbReference type="Gene3D" id="3.30.470.20">
    <property type="entry name" value="ATP-grasp fold, B domain"/>
    <property type="match status" value="1"/>
</dbReference>
<dbReference type="HAMAP" id="MF_00047">
    <property type="entry name" value="Dala_Dala_lig"/>
    <property type="match status" value="1"/>
</dbReference>
<dbReference type="InterPro" id="IPR011761">
    <property type="entry name" value="ATP-grasp"/>
</dbReference>
<dbReference type="InterPro" id="IPR013815">
    <property type="entry name" value="ATP_grasp_subdomain_1"/>
</dbReference>
<dbReference type="InterPro" id="IPR000291">
    <property type="entry name" value="D-Ala_lig_Van_CS"/>
</dbReference>
<dbReference type="InterPro" id="IPR005905">
    <property type="entry name" value="D_ala_D_ala"/>
</dbReference>
<dbReference type="InterPro" id="IPR011095">
    <property type="entry name" value="Dala_Dala_lig_C"/>
</dbReference>
<dbReference type="InterPro" id="IPR011127">
    <property type="entry name" value="Dala_Dala_lig_N"/>
</dbReference>
<dbReference type="InterPro" id="IPR016185">
    <property type="entry name" value="PreATP-grasp_dom_sf"/>
</dbReference>
<dbReference type="NCBIfam" id="TIGR01205">
    <property type="entry name" value="D_ala_D_alaTIGR"/>
    <property type="match status" value="1"/>
</dbReference>
<dbReference type="NCBIfam" id="NF002378">
    <property type="entry name" value="PRK01372.1"/>
    <property type="match status" value="1"/>
</dbReference>
<dbReference type="PANTHER" id="PTHR23132">
    <property type="entry name" value="D-ALANINE--D-ALANINE LIGASE"/>
    <property type="match status" value="1"/>
</dbReference>
<dbReference type="PANTHER" id="PTHR23132:SF23">
    <property type="entry name" value="D-ALANINE--D-ALANINE LIGASE B"/>
    <property type="match status" value="1"/>
</dbReference>
<dbReference type="Pfam" id="PF07478">
    <property type="entry name" value="Dala_Dala_lig_C"/>
    <property type="match status" value="1"/>
</dbReference>
<dbReference type="Pfam" id="PF01820">
    <property type="entry name" value="Dala_Dala_lig_N"/>
    <property type="match status" value="1"/>
</dbReference>
<dbReference type="PIRSF" id="PIRSF039102">
    <property type="entry name" value="Ddl/VanB"/>
    <property type="match status" value="1"/>
</dbReference>
<dbReference type="SUPFAM" id="SSF56059">
    <property type="entry name" value="Glutathione synthetase ATP-binding domain-like"/>
    <property type="match status" value="1"/>
</dbReference>
<dbReference type="SUPFAM" id="SSF52440">
    <property type="entry name" value="PreATP-grasp domain"/>
    <property type="match status" value="1"/>
</dbReference>
<dbReference type="PROSITE" id="PS50975">
    <property type="entry name" value="ATP_GRASP"/>
    <property type="match status" value="1"/>
</dbReference>
<dbReference type="PROSITE" id="PS00843">
    <property type="entry name" value="DALA_DALA_LIGASE_1"/>
    <property type="match status" value="1"/>
</dbReference>
<dbReference type="PROSITE" id="PS00844">
    <property type="entry name" value="DALA_DALA_LIGASE_2"/>
    <property type="match status" value="1"/>
</dbReference>
<sequence length="311" mass="33873">MSSEQAAAMGRVAVLMGGDSAEREISLISGRAVFEALRRRGVDAEAVDTAQVALAELTGFDRAFIALHGRGGEDGVIQGALEALGVPYTGSGVLGCAIGMDKWRTKLLWRGAELPVPPGALLRPETNRQALIGSVGLPLMIKPAHEGSSIGMAKVERPEELEAARAEAARYDDLVLAERWIEGGEYTVAILGEEALPAIRLETPRGFYDFEAKYRSGDTRYHCPAGLTEAEEQQIRQLALDAFRVAGASGWGRVDFMRDRQGRFWLLEINTIPGMTDHSLVPMAARAVGIDFDELCWRILLDSRRREAGRP</sequence>
<accession>Q0A6K5</accession>